<reference key="1">
    <citation type="journal article" date="2009" name="Genome Biol.">
        <title>Genomic and genetic analyses of diversity and plant interactions of Pseudomonas fluorescens.</title>
        <authorList>
            <person name="Silby M.W."/>
            <person name="Cerdeno-Tarraga A.M."/>
            <person name="Vernikos G.S."/>
            <person name="Giddens S.R."/>
            <person name="Jackson R.W."/>
            <person name="Preston G.M."/>
            <person name="Zhang X.-X."/>
            <person name="Moon C.D."/>
            <person name="Gehrig S.M."/>
            <person name="Godfrey S.A.C."/>
            <person name="Knight C.G."/>
            <person name="Malone J.G."/>
            <person name="Robinson Z."/>
            <person name="Spiers A.J."/>
            <person name="Harris S."/>
            <person name="Challis G.L."/>
            <person name="Yaxley A.M."/>
            <person name="Harris D."/>
            <person name="Seeger K."/>
            <person name="Murphy L."/>
            <person name="Rutter S."/>
            <person name="Squares R."/>
            <person name="Quail M.A."/>
            <person name="Saunders E."/>
            <person name="Mavromatis K."/>
            <person name="Brettin T.S."/>
            <person name="Bentley S.D."/>
            <person name="Hothersall J."/>
            <person name="Stephens E."/>
            <person name="Thomas C.M."/>
            <person name="Parkhill J."/>
            <person name="Levy S.B."/>
            <person name="Rainey P.B."/>
            <person name="Thomson N.R."/>
        </authorList>
    </citation>
    <scope>NUCLEOTIDE SEQUENCE [LARGE SCALE GENOMIC DNA]</scope>
    <source>
        <strain>Pf0-1</strain>
    </source>
</reference>
<dbReference type="EC" id="2.7.1.23" evidence="1"/>
<dbReference type="EMBL" id="CP000094">
    <property type="protein sequence ID" value="ABA73938.1"/>
    <property type="molecule type" value="Genomic_DNA"/>
</dbReference>
<dbReference type="RefSeq" id="WP_011333623.1">
    <property type="nucleotide sequence ID" value="NC_007492.2"/>
</dbReference>
<dbReference type="SMR" id="Q3KE68"/>
<dbReference type="KEGG" id="pfo:Pfl01_2195"/>
<dbReference type="eggNOG" id="COG0061">
    <property type="taxonomic scope" value="Bacteria"/>
</dbReference>
<dbReference type="HOGENOM" id="CLU_008831_0_1_6"/>
<dbReference type="Proteomes" id="UP000002704">
    <property type="component" value="Chromosome"/>
</dbReference>
<dbReference type="GO" id="GO:0005737">
    <property type="term" value="C:cytoplasm"/>
    <property type="evidence" value="ECO:0007669"/>
    <property type="project" value="UniProtKB-SubCell"/>
</dbReference>
<dbReference type="GO" id="GO:0005524">
    <property type="term" value="F:ATP binding"/>
    <property type="evidence" value="ECO:0007669"/>
    <property type="project" value="UniProtKB-KW"/>
</dbReference>
<dbReference type="GO" id="GO:0046872">
    <property type="term" value="F:metal ion binding"/>
    <property type="evidence" value="ECO:0007669"/>
    <property type="project" value="UniProtKB-UniRule"/>
</dbReference>
<dbReference type="GO" id="GO:0051287">
    <property type="term" value="F:NAD binding"/>
    <property type="evidence" value="ECO:0007669"/>
    <property type="project" value="UniProtKB-ARBA"/>
</dbReference>
<dbReference type="GO" id="GO:0003951">
    <property type="term" value="F:NAD+ kinase activity"/>
    <property type="evidence" value="ECO:0007669"/>
    <property type="project" value="UniProtKB-UniRule"/>
</dbReference>
<dbReference type="GO" id="GO:0019674">
    <property type="term" value="P:NAD metabolic process"/>
    <property type="evidence" value="ECO:0007669"/>
    <property type="project" value="InterPro"/>
</dbReference>
<dbReference type="GO" id="GO:0006741">
    <property type="term" value="P:NADP biosynthetic process"/>
    <property type="evidence" value="ECO:0007669"/>
    <property type="project" value="UniProtKB-UniRule"/>
</dbReference>
<dbReference type="FunFam" id="2.60.200.30:FF:000001">
    <property type="entry name" value="NAD kinase"/>
    <property type="match status" value="1"/>
</dbReference>
<dbReference type="Gene3D" id="3.40.50.10330">
    <property type="entry name" value="Probable inorganic polyphosphate/atp-NAD kinase, domain 1"/>
    <property type="match status" value="1"/>
</dbReference>
<dbReference type="Gene3D" id="2.60.200.30">
    <property type="entry name" value="Probable inorganic polyphosphate/atp-NAD kinase, domain 2"/>
    <property type="match status" value="1"/>
</dbReference>
<dbReference type="HAMAP" id="MF_00361">
    <property type="entry name" value="NAD_kinase"/>
    <property type="match status" value="1"/>
</dbReference>
<dbReference type="InterPro" id="IPR017438">
    <property type="entry name" value="ATP-NAD_kinase_N"/>
</dbReference>
<dbReference type="InterPro" id="IPR017437">
    <property type="entry name" value="ATP-NAD_kinase_PpnK-typ_C"/>
</dbReference>
<dbReference type="InterPro" id="IPR016064">
    <property type="entry name" value="NAD/diacylglycerol_kinase_sf"/>
</dbReference>
<dbReference type="InterPro" id="IPR002504">
    <property type="entry name" value="NADK"/>
</dbReference>
<dbReference type="NCBIfam" id="NF002306">
    <property type="entry name" value="PRK01231.1"/>
    <property type="match status" value="1"/>
</dbReference>
<dbReference type="PANTHER" id="PTHR20275">
    <property type="entry name" value="NAD KINASE"/>
    <property type="match status" value="1"/>
</dbReference>
<dbReference type="PANTHER" id="PTHR20275:SF0">
    <property type="entry name" value="NAD KINASE"/>
    <property type="match status" value="1"/>
</dbReference>
<dbReference type="Pfam" id="PF01513">
    <property type="entry name" value="NAD_kinase"/>
    <property type="match status" value="1"/>
</dbReference>
<dbReference type="Pfam" id="PF20143">
    <property type="entry name" value="NAD_kinase_C"/>
    <property type="match status" value="1"/>
</dbReference>
<dbReference type="SUPFAM" id="SSF111331">
    <property type="entry name" value="NAD kinase/diacylglycerol kinase-like"/>
    <property type="match status" value="1"/>
</dbReference>
<accession>Q3KE68</accession>
<evidence type="ECO:0000255" key="1">
    <source>
        <dbReference type="HAMAP-Rule" id="MF_00361"/>
    </source>
</evidence>
<feature type="chain" id="PRO_0000229679" description="NAD kinase">
    <location>
        <begin position="1"/>
        <end position="296"/>
    </location>
</feature>
<feature type="active site" description="Proton acceptor" evidence="1">
    <location>
        <position position="72"/>
    </location>
</feature>
<feature type="binding site" evidence="1">
    <location>
        <begin position="72"/>
        <end position="73"/>
    </location>
    <ligand>
        <name>NAD(+)</name>
        <dbReference type="ChEBI" id="CHEBI:57540"/>
    </ligand>
</feature>
<feature type="binding site" evidence="1">
    <location>
        <begin position="146"/>
        <end position="147"/>
    </location>
    <ligand>
        <name>NAD(+)</name>
        <dbReference type="ChEBI" id="CHEBI:57540"/>
    </ligand>
</feature>
<feature type="binding site" evidence="1">
    <location>
        <position position="157"/>
    </location>
    <ligand>
        <name>NAD(+)</name>
        <dbReference type="ChEBI" id="CHEBI:57540"/>
    </ligand>
</feature>
<feature type="binding site" evidence="1">
    <location>
        <position position="174"/>
    </location>
    <ligand>
        <name>NAD(+)</name>
        <dbReference type="ChEBI" id="CHEBI:57540"/>
    </ligand>
</feature>
<feature type="binding site" evidence="1">
    <location>
        <position position="176"/>
    </location>
    <ligand>
        <name>NAD(+)</name>
        <dbReference type="ChEBI" id="CHEBI:57540"/>
    </ligand>
</feature>
<feature type="binding site" evidence="1">
    <location>
        <begin position="187"/>
        <end position="192"/>
    </location>
    <ligand>
        <name>NAD(+)</name>
        <dbReference type="ChEBI" id="CHEBI:57540"/>
    </ligand>
</feature>
<feature type="binding site" evidence="1">
    <location>
        <position position="247"/>
    </location>
    <ligand>
        <name>NAD(+)</name>
        <dbReference type="ChEBI" id="CHEBI:57540"/>
    </ligand>
</feature>
<sequence>MEQFRNIGIIGRLGSSQVLDTVRRLKRFLLDRHLHVILEDTIAEVLPGHGLQTSSRKMLGEVCDMVIVVGGDGSLLGAARALAKHNIPVLGINRGSLGFLTDIRPDELEIKVAEVLDGHYLVENRFLLQAEVRRHAEAIGQGDALNDVVLHPGKSTRMIEFELYIDGQFVCSQKADGLIVATPTGSTAYALSAGGPIMHPKLDAIVIVPMYPHTLSGRPIVVDGNSELKIVVSKDMQIYPQVSCDGQNHFTCAPGDTITVSKKAQKLRLIHPLDHNYYEVCRTKLGWGSKLGGGGD</sequence>
<protein>
    <recommendedName>
        <fullName evidence="1">NAD kinase</fullName>
        <ecNumber evidence="1">2.7.1.23</ecNumber>
    </recommendedName>
    <alternativeName>
        <fullName evidence="1">ATP-dependent NAD kinase</fullName>
    </alternativeName>
</protein>
<keyword id="KW-0067">ATP-binding</keyword>
<keyword id="KW-0963">Cytoplasm</keyword>
<keyword id="KW-0418">Kinase</keyword>
<keyword id="KW-0520">NAD</keyword>
<keyword id="KW-0521">NADP</keyword>
<keyword id="KW-0547">Nucleotide-binding</keyword>
<keyword id="KW-0808">Transferase</keyword>
<comment type="function">
    <text evidence="1">Involved in the regulation of the intracellular balance of NAD and NADP, and is a key enzyme in the biosynthesis of NADP. Catalyzes specifically the phosphorylation on 2'-hydroxyl of the adenosine moiety of NAD to yield NADP.</text>
</comment>
<comment type="catalytic activity">
    <reaction evidence="1">
        <text>NAD(+) + ATP = ADP + NADP(+) + H(+)</text>
        <dbReference type="Rhea" id="RHEA:18629"/>
        <dbReference type="ChEBI" id="CHEBI:15378"/>
        <dbReference type="ChEBI" id="CHEBI:30616"/>
        <dbReference type="ChEBI" id="CHEBI:57540"/>
        <dbReference type="ChEBI" id="CHEBI:58349"/>
        <dbReference type="ChEBI" id="CHEBI:456216"/>
        <dbReference type="EC" id="2.7.1.23"/>
    </reaction>
</comment>
<comment type="cofactor">
    <cofactor evidence="1">
        <name>a divalent metal cation</name>
        <dbReference type="ChEBI" id="CHEBI:60240"/>
    </cofactor>
</comment>
<comment type="subcellular location">
    <subcellularLocation>
        <location evidence="1">Cytoplasm</location>
    </subcellularLocation>
</comment>
<comment type="similarity">
    <text evidence="1">Belongs to the NAD kinase family.</text>
</comment>
<gene>
    <name evidence="1" type="primary">nadK</name>
    <name type="ordered locus">Pfl01_2195</name>
</gene>
<organism>
    <name type="scientific">Pseudomonas fluorescens (strain Pf0-1)</name>
    <dbReference type="NCBI Taxonomy" id="205922"/>
    <lineage>
        <taxon>Bacteria</taxon>
        <taxon>Pseudomonadati</taxon>
        <taxon>Pseudomonadota</taxon>
        <taxon>Gammaproteobacteria</taxon>
        <taxon>Pseudomonadales</taxon>
        <taxon>Pseudomonadaceae</taxon>
        <taxon>Pseudomonas</taxon>
    </lineage>
</organism>
<proteinExistence type="inferred from homology"/>
<name>NADK_PSEPF</name>